<reference key="1">
    <citation type="journal article" date="1994" name="Science">
        <title>Complete nucleotide sequence of Saccharomyces cerevisiae chromosome VIII.</title>
        <authorList>
            <person name="Johnston M."/>
            <person name="Andrews S."/>
            <person name="Brinkman R."/>
            <person name="Cooper J."/>
            <person name="Ding H."/>
            <person name="Dover J."/>
            <person name="Du Z."/>
            <person name="Favello A."/>
            <person name="Fulton L."/>
            <person name="Gattung S."/>
            <person name="Geisel C."/>
            <person name="Kirsten J."/>
            <person name="Kucaba T."/>
            <person name="Hillier L.W."/>
            <person name="Jier M."/>
            <person name="Johnston L."/>
            <person name="Langston Y."/>
            <person name="Latreille P."/>
            <person name="Louis E.J."/>
            <person name="Macri C."/>
            <person name="Mardis E."/>
            <person name="Menezes S."/>
            <person name="Mouser L."/>
            <person name="Nhan M."/>
            <person name="Rifkin L."/>
            <person name="Riles L."/>
            <person name="St Peter H."/>
            <person name="Trevaskis E."/>
            <person name="Vaughan K."/>
            <person name="Vignati D."/>
            <person name="Wilcox L."/>
            <person name="Wohldman P."/>
            <person name="Waterston R."/>
            <person name="Wilson R."/>
            <person name="Vaudin M."/>
        </authorList>
    </citation>
    <scope>NUCLEOTIDE SEQUENCE [LARGE SCALE GENOMIC DNA]</scope>
    <source>
        <strain>ATCC 204508 / S288c</strain>
    </source>
</reference>
<reference key="2">
    <citation type="journal article" date="2014" name="G3 (Bethesda)">
        <title>The reference genome sequence of Saccharomyces cerevisiae: Then and now.</title>
        <authorList>
            <person name="Engel S.R."/>
            <person name="Dietrich F.S."/>
            <person name="Fisk D.G."/>
            <person name="Binkley G."/>
            <person name="Balakrishnan R."/>
            <person name="Costanzo M.C."/>
            <person name="Dwight S.S."/>
            <person name="Hitz B.C."/>
            <person name="Karra K."/>
            <person name="Nash R.S."/>
            <person name="Weng S."/>
            <person name="Wong E.D."/>
            <person name="Lloyd P."/>
            <person name="Skrzypek M.S."/>
            <person name="Miyasato S.R."/>
            <person name="Simison M."/>
            <person name="Cherry J.M."/>
        </authorList>
    </citation>
    <scope>GENOME REANNOTATION</scope>
    <source>
        <strain>ATCC 204508 / S288c</strain>
    </source>
</reference>
<reference key="3">
    <citation type="journal article" date="2002" name="Nat. Biotechnol.">
        <title>An integrated approach for finding overlooked genes in yeast.</title>
        <authorList>
            <person name="Kumar A."/>
            <person name="Harrison P.M."/>
            <person name="Cheung K.-H."/>
            <person name="Lan N."/>
            <person name="Echols N."/>
            <person name="Bertone P."/>
            <person name="Miller P."/>
            <person name="Gerstein M.B."/>
            <person name="Snyder M."/>
        </authorList>
    </citation>
    <scope>NUCLEOTIDE SEQUENCE [GENOMIC DNA]</scope>
</reference>
<sequence>MLAKTGDVVVQKVPVIRLSVFLHFFFVFPFCLLHRLYMGMKQVQEFIMEPKGSVFVVRATLRVSLENAGKIFFNETE</sequence>
<evidence type="ECO:0000255" key="1"/>
<evidence type="ECO:0000305" key="2"/>
<protein>
    <recommendedName>
        <fullName>Uncharacterized protein YHR213W-A</fullName>
    </recommendedName>
</protein>
<feature type="chain" id="PRO_0000245398" description="Uncharacterized protein YHR213W-A">
    <location>
        <begin position="1"/>
        <end position="77"/>
    </location>
</feature>
<feature type="transmembrane region" description="Helical" evidence="1">
    <location>
        <begin position="13"/>
        <end position="33"/>
    </location>
</feature>
<organism>
    <name type="scientific">Saccharomyces cerevisiae (strain ATCC 204508 / S288c)</name>
    <name type="common">Baker's yeast</name>
    <dbReference type="NCBI Taxonomy" id="559292"/>
    <lineage>
        <taxon>Eukaryota</taxon>
        <taxon>Fungi</taxon>
        <taxon>Dikarya</taxon>
        <taxon>Ascomycota</taxon>
        <taxon>Saccharomycotina</taxon>
        <taxon>Saccharomycetes</taxon>
        <taxon>Saccharomycetales</taxon>
        <taxon>Saccharomycetaceae</taxon>
        <taxon>Saccharomyces</taxon>
    </lineage>
</organism>
<keyword id="KW-0472">Membrane</keyword>
<keyword id="KW-1185">Reference proteome</keyword>
<keyword id="KW-0812">Transmembrane</keyword>
<keyword id="KW-1133">Transmembrane helix</keyword>
<dbReference type="EMBL" id="U00029">
    <property type="status" value="NOT_ANNOTATED_CDS"/>
    <property type="molecule type" value="Genomic_DNA"/>
</dbReference>
<dbReference type="EMBL" id="AF479901">
    <property type="protein sequence ID" value="AAL79214.1"/>
    <property type="molecule type" value="Genomic_DNA"/>
</dbReference>
<dbReference type="EMBL" id="BK006934">
    <property type="protein sequence ID" value="DAA06907.1"/>
    <property type="molecule type" value="Genomic_DNA"/>
</dbReference>
<dbReference type="RefSeq" id="NP_878092.3">
    <property type="nucleotide sequence ID" value="NM_001184599.3"/>
</dbReference>
<dbReference type="BioGRID" id="37074">
    <property type="interactions" value="2"/>
</dbReference>
<dbReference type="FunCoup" id="Q8TGT4">
    <property type="interactions" value="11"/>
</dbReference>
<dbReference type="STRING" id="4932.YHR213W-A"/>
<dbReference type="PaxDb" id="4932-YHR213W-A"/>
<dbReference type="EnsemblFungi" id="YHR213W-A_mRNA">
    <property type="protein sequence ID" value="YHR213W-A"/>
    <property type="gene ID" value="YHR213W-A"/>
</dbReference>
<dbReference type="GeneID" id="1466532"/>
<dbReference type="KEGG" id="sce:YHR213W-A"/>
<dbReference type="AGR" id="SGD:S000028651"/>
<dbReference type="SGD" id="S000028651">
    <property type="gene designation" value="YHR213W-A"/>
</dbReference>
<dbReference type="VEuPathDB" id="FungiDB:YHR213W-A"/>
<dbReference type="HOGENOM" id="CLU_2639996_0_0_1"/>
<dbReference type="InParanoid" id="Q8TGT4"/>
<dbReference type="BioCyc" id="YEAST:G3O-31271-MONOMER"/>
<dbReference type="PRO" id="PR:Q8TGT4"/>
<dbReference type="Proteomes" id="UP000002311">
    <property type="component" value="Chromosome VIII"/>
</dbReference>
<dbReference type="RNAct" id="Q8TGT4">
    <property type="molecule type" value="protein"/>
</dbReference>
<dbReference type="GO" id="GO:0016020">
    <property type="term" value="C:membrane"/>
    <property type="evidence" value="ECO:0007669"/>
    <property type="project" value="UniProtKB-SubCell"/>
</dbReference>
<proteinExistence type="predicted"/>
<comment type="subcellular location">
    <subcellularLocation>
        <location evidence="2">Membrane</location>
        <topology evidence="2">Single-pass membrane protein</topology>
    </subcellularLocation>
</comment>
<gene>
    <name type="ordered locus">YHR213W-A</name>
</gene>
<accession>Q8TGT4</accession>
<accession>D3DLG3</accession>
<name>YH213_YEAST</name>